<organism>
    <name type="scientific">Escherichia coli O157:H7</name>
    <dbReference type="NCBI Taxonomy" id="83334"/>
    <lineage>
        <taxon>Bacteria</taxon>
        <taxon>Pseudomonadati</taxon>
        <taxon>Pseudomonadota</taxon>
        <taxon>Gammaproteobacteria</taxon>
        <taxon>Enterobacterales</taxon>
        <taxon>Enterobacteriaceae</taxon>
        <taxon>Escherichia</taxon>
    </lineage>
</organism>
<proteinExistence type="inferred from homology"/>
<comment type="function">
    <text evidence="1">Flavin transferase that catalyzes the transfer of the FMN moiety of FAD and its covalent binding to the hydroxyl group of a threonine residue in a target flavoprotein such as NqrB and NqrC, two subunits of the NQR complex.</text>
</comment>
<comment type="catalytic activity">
    <reaction evidence="1">
        <text>L-threonyl-[protein] + FAD = FMN-L-threonyl-[protein] + AMP + H(+)</text>
        <dbReference type="Rhea" id="RHEA:36847"/>
        <dbReference type="Rhea" id="RHEA-COMP:11060"/>
        <dbReference type="Rhea" id="RHEA-COMP:11061"/>
        <dbReference type="ChEBI" id="CHEBI:15378"/>
        <dbReference type="ChEBI" id="CHEBI:30013"/>
        <dbReference type="ChEBI" id="CHEBI:57692"/>
        <dbReference type="ChEBI" id="CHEBI:74257"/>
        <dbReference type="ChEBI" id="CHEBI:456215"/>
        <dbReference type="EC" id="2.7.1.180"/>
    </reaction>
</comment>
<comment type="cofactor">
    <cofactor evidence="1">
        <name>Mg(2+)</name>
        <dbReference type="ChEBI" id="CHEBI:18420"/>
    </cofactor>
</comment>
<comment type="subcellular location">
    <subcellularLocation>
        <location evidence="4 5">Cell inner membrane</location>
        <topology evidence="4 5">Lipid-anchor</topology>
        <orientation evidence="4">Periplasmic side</orientation>
    </subcellularLocation>
</comment>
<comment type="similarity">
    <text evidence="6">Belongs to the ApbE family.</text>
</comment>
<accession>P0AB86</accession>
<accession>P33943</accession>
<accession>P33944</accession>
<accession>P76455</accession>
<gene>
    <name type="primary">apbE</name>
    <name type="ordered locus">Z3472</name>
    <name type="ordered locus">ECs3103</name>
</gene>
<sequence>MEISFTRVALLAAALFFVGCDQKPQPAKTHATEVTVLEGKTMGTFWRASIPGIDAKRSAELKEKIQTQLDADDQLLSTYKKDSALMRFNDSQSLSPWPVSEAMADIVTTSLRIGAKTDGAMDITVGPLVNLWGFGPEQQPVQIPSQEQIDAMKAKTGLQHLTVINQSHQQYLQKDLPDLYVDLSTVGEGYAADHLARLMEQEGISRYLVSVGGALNSRGMNGEGLPWRVAIQKPTDKENAVQAVVDINGHGISTSGSYRNYYELDGKRLSHVIDPQTGRPIEHNLVSVTVIAPTALEADAWDTGLMVLGPEKAKEVVRREGLAVYMITKEGDSFKTWMSPQFKSFLVSEKN</sequence>
<reference key="1">
    <citation type="journal article" date="2001" name="Nature">
        <title>Genome sequence of enterohaemorrhagic Escherichia coli O157:H7.</title>
        <authorList>
            <person name="Perna N.T."/>
            <person name="Plunkett G. III"/>
            <person name="Burland V."/>
            <person name="Mau B."/>
            <person name="Glasner J.D."/>
            <person name="Rose D.J."/>
            <person name="Mayhew G.F."/>
            <person name="Evans P.S."/>
            <person name="Gregor J."/>
            <person name="Kirkpatrick H.A."/>
            <person name="Posfai G."/>
            <person name="Hackett J."/>
            <person name="Klink S."/>
            <person name="Boutin A."/>
            <person name="Shao Y."/>
            <person name="Miller L."/>
            <person name="Grotbeck E.J."/>
            <person name="Davis N.W."/>
            <person name="Lim A."/>
            <person name="Dimalanta E.T."/>
            <person name="Potamousis K."/>
            <person name="Apodaca J."/>
            <person name="Anantharaman T.S."/>
            <person name="Lin J."/>
            <person name="Yen G."/>
            <person name="Schwartz D.C."/>
            <person name="Welch R.A."/>
            <person name="Blattner F.R."/>
        </authorList>
    </citation>
    <scope>NUCLEOTIDE SEQUENCE [LARGE SCALE GENOMIC DNA]</scope>
    <source>
        <strain>O157:H7 / EDL933 / ATCC 700927 / EHEC</strain>
    </source>
</reference>
<reference key="2">
    <citation type="journal article" date="2001" name="DNA Res.">
        <title>Complete genome sequence of enterohemorrhagic Escherichia coli O157:H7 and genomic comparison with a laboratory strain K-12.</title>
        <authorList>
            <person name="Hayashi T."/>
            <person name="Makino K."/>
            <person name="Ohnishi M."/>
            <person name="Kurokawa K."/>
            <person name="Ishii K."/>
            <person name="Yokoyama K."/>
            <person name="Han C.-G."/>
            <person name="Ohtsubo E."/>
            <person name="Nakayama K."/>
            <person name="Murata T."/>
            <person name="Tanaka M."/>
            <person name="Tobe T."/>
            <person name="Iida T."/>
            <person name="Takami H."/>
            <person name="Honda T."/>
            <person name="Sasakawa C."/>
            <person name="Ogasawara N."/>
            <person name="Yasunaga T."/>
            <person name="Kuhara S."/>
            <person name="Shiba T."/>
            <person name="Hattori M."/>
            <person name="Shinagawa H."/>
        </authorList>
    </citation>
    <scope>NUCLEOTIDE SEQUENCE [LARGE SCALE GENOMIC DNA]</scope>
    <source>
        <strain>O157:H7 / Sakai / RIMD 0509952 / EHEC</strain>
    </source>
</reference>
<protein>
    <recommendedName>
        <fullName evidence="1">FAD:protein FMN transferase</fullName>
        <ecNumber evidence="1">2.7.1.180</ecNumber>
    </recommendedName>
    <alternativeName>
        <fullName evidence="1">Flavin transferase</fullName>
    </alternativeName>
</protein>
<keyword id="KW-0997">Cell inner membrane</keyword>
<keyword id="KW-1003">Cell membrane</keyword>
<keyword id="KW-0274">FAD</keyword>
<keyword id="KW-0285">Flavoprotein</keyword>
<keyword id="KW-0449">Lipoprotein</keyword>
<keyword id="KW-0460">Magnesium</keyword>
<keyword id="KW-0472">Membrane</keyword>
<keyword id="KW-0479">Metal-binding</keyword>
<keyword id="KW-0564">Palmitate</keyword>
<keyword id="KW-1185">Reference proteome</keyword>
<keyword id="KW-0732">Signal</keyword>
<keyword id="KW-0808">Transferase</keyword>
<feature type="signal peptide" evidence="5">
    <location>
        <begin position="1"/>
        <end position="19"/>
    </location>
</feature>
<feature type="chain" id="PRO_0000042801" description="FAD:protein FMN transferase">
    <location>
        <begin position="20"/>
        <end position="351"/>
    </location>
</feature>
<feature type="binding site" evidence="4">
    <location>
        <position position="42"/>
    </location>
    <ligand>
        <name>FAD</name>
        <dbReference type="ChEBI" id="CHEBI:57692"/>
    </ligand>
</feature>
<feature type="binding site" evidence="4">
    <location>
        <position position="79"/>
    </location>
    <ligand>
        <name>FAD</name>
        <dbReference type="ChEBI" id="CHEBI:57692"/>
    </ligand>
</feature>
<feature type="binding site" evidence="4">
    <location>
        <begin position="120"/>
        <end position="122"/>
    </location>
    <ligand>
        <name>FAD</name>
        <dbReference type="ChEBI" id="CHEBI:57692"/>
    </ligand>
</feature>
<feature type="binding site" evidence="4">
    <location>
        <position position="182"/>
    </location>
    <ligand>
        <name>FAD</name>
        <dbReference type="ChEBI" id="CHEBI:57692"/>
    </ligand>
</feature>
<feature type="binding site" evidence="3">
    <location>
        <position position="185"/>
    </location>
    <ligand>
        <name>Mg(2+)</name>
        <dbReference type="ChEBI" id="CHEBI:18420"/>
    </ligand>
</feature>
<feature type="binding site" evidence="4">
    <location>
        <position position="188"/>
    </location>
    <ligand>
        <name>FAD</name>
        <dbReference type="ChEBI" id="CHEBI:57692"/>
    </ligand>
</feature>
<feature type="binding site" evidence="4">
    <location>
        <position position="273"/>
    </location>
    <ligand>
        <name>FAD</name>
        <dbReference type="ChEBI" id="CHEBI:57692"/>
    </ligand>
</feature>
<feature type="binding site" evidence="2">
    <location>
        <position position="299"/>
    </location>
    <ligand>
        <name>Mg(2+)</name>
        <dbReference type="ChEBI" id="CHEBI:18420"/>
    </ligand>
</feature>
<feature type="binding site" evidence="3">
    <location>
        <position position="302"/>
    </location>
    <ligand>
        <name>Mg(2+)</name>
        <dbReference type="ChEBI" id="CHEBI:18420"/>
    </ligand>
</feature>
<feature type="binding site" evidence="2">
    <location>
        <position position="303"/>
    </location>
    <ligand>
        <name>Mg(2+)</name>
        <dbReference type="ChEBI" id="CHEBI:18420"/>
    </ligand>
</feature>
<feature type="lipid moiety-binding region" description="N-palmitoyl cysteine" evidence="5">
    <location>
        <position position="20"/>
    </location>
</feature>
<feature type="lipid moiety-binding region" description="S-diacylglycerol cysteine" evidence="5">
    <location>
        <position position="20"/>
    </location>
</feature>
<name>APBE_ECO57</name>
<evidence type="ECO:0000250" key="1">
    <source>
        <dbReference type="UniProtKB" id="A5F5Y3"/>
    </source>
</evidence>
<evidence type="ECO:0000250" key="2">
    <source>
        <dbReference type="UniProtKB" id="O83774"/>
    </source>
</evidence>
<evidence type="ECO:0000250" key="3">
    <source>
        <dbReference type="UniProtKB" id="P0AB85"/>
    </source>
</evidence>
<evidence type="ECO:0000250" key="4">
    <source>
        <dbReference type="UniProtKB" id="P41780"/>
    </source>
</evidence>
<evidence type="ECO:0000255" key="5">
    <source>
        <dbReference type="PROSITE-ProRule" id="PRU00303"/>
    </source>
</evidence>
<evidence type="ECO:0000305" key="6"/>
<dbReference type="EC" id="2.7.1.180" evidence="1"/>
<dbReference type="EMBL" id="AE005174">
    <property type="protein sequence ID" value="AAG57349.1"/>
    <property type="molecule type" value="Genomic_DNA"/>
</dbReference>
<dbReference type="EMBL" id="BA000007">
    <property type="protein sequence ID" value="BAB36526.1"/>
    <property type="molecule type" value="Genomic_DNA"/>
</dbReference>
<dbReference type="PIR" id="A85861">
    <property type="entry name" value="A85861"/>
</dbReference>
<dbReference type="PIR" id="G91016">
    <property type="entry name" value="G91016"/>
</dbReference>
<dbReference type="RefSeq" id="NP_311130.1">
    <property type="nucleotide sequence ID" value="NC_002695.1"/>
</dbReference>
<dbReference type="RefSeq" id="WP_000406064.1">
    <property type="nucleotide sequence ID" value="NZ_VOAI01000001.1"/>
</dbReference>
<dbReference type="SMR" id="P0AB86"/>
<dbReference type="STRING" id="155864.Z3472"/>
<dbReference type="DNASU" id="957195"/>
<dbReference type="GeneID" id="916810"/>
<dbReference type="KEGG" id="ece:Z3472"/>
<dbReference type="KEGG" id="ecs:ECs_3103"/>
<dbReference type="PATRIC" id="fig|386585.9.peg.3237"/>
<dbReference type="eggNOG" id="COG1477">
    <property type="taxonomic scope" value="Bacteria"/>
</dbReference>
<dbReference type="HOGENOM" id="CLU_044403_0_0_6"/>
<dbReference type="OMA" id="DTQFLMG"/>
<dbReference type="Proteomes" id="UP000000558">
    <property type="component" value="Chromosome"/>
</dbReference>
<dbReference type="Proteomes" id="UP000002519">
    <property type="component" value="Chromosome"/>
</dbReference>
<dbReference type="GO" id="GO:0005886">
    <property type="term" value="C:plasma membrane"/>
    <property type="evidence" value="ECO:0007669"/>
    <property type="project" value="UniProtKB-SubCell"/>
</dbReference>
<dbReference type="GO" id="GO:0046872">
    <property type="term" value="F:metal ion binding"/>
    <property type="evidence" value="ECO:0007669"/>
    <property type="project" value="UniProtKB-KW"/>
</dbReference>
<dbReference type="GO" id="GO:0016740">
    <property type="term" value="F:transferase activity"/>
    <property type="evidence" value="ECO:0007669"/>
    <property type="project" value="UniProtKB-KW"/>
</dbReference>
<dbReference type="FunFam" id="3.10.520.10:FF:000001">
    <property type="entry name" value="FAD:protein FMN transferase"/>
    <property type="match status" value="1"/>
</dbReference>
<dbReference type="Gene3D" id="3.10.520.10">
    <property type="entry name" value="ApbE-like domains"/>
    <property type="match status" value="1"/>
</dbReference>
<dbReference type="InterPro" id="IPR024932">
    <property type="entry name" value="ApbE"/>
</dbReference>
<dbReference type="InterPro" id="IPR003374">
    <property type="entry name" value="ApbE-like_sf"/>
</dbReference>
<dbReference type="NCBIfam" id="NF007774">
    <property type="entry name" value="PRK10461.1"/>
    <property type="match status" value="1"/>
</dbReference>
<dbReference type="PANTHER" id="PTHR30040:SF2">
    <property type="entry name" value="FAD:PROTEIN FMN TRANSFERASE"/>
    <property type="match status" value="1"/>
</dbReference>
<dbReference type="PANTHER" id="PTHR30040">
    <property type="entry name" value="THIAMINE BIOSYNTHESIS LIPOPROTEIN APBE"/>
    <property type="match status" value="1"/>
</dbReference>
<dbReference type="Pfam" id="PF02424">
    <property type="entry name" value="ApbE"/>
    <property type="match status" value="1"/>
</dbReference>
<dbReference type="PIRSF" id="PIRSF006268">
    <property type="entry name" value="ApbE"/>
    <property type="match status" value="1"/>
</dbReference>
<dbReference type="SUPFAM" id="SSF143631">
    <property type="entry name" value="ApbE-like"/>
    <property type="match status" value="1"/>
</dbReference>
<dbReference type="PROSITE" id="PS51257">
    <property type="entry name" value="PROKAR_LIPOPROTEIN"/>
    <property type="match status" value="1"/>
</dbReference>